<dbReference type="EC" id="2.7.1.71" evidence="1"/>
<dbReference type="EMBL" id="CP000437">
    <property type="protein sequence ID" value="ABI82729.1"/>
    <property type="molecule type" value="Genomic_DNA"/>
</dbReference>
<dbReference type="RefSeq" id="WP_003015352.1">
    <property type="nucleotide sequence ID" value="NC_017463.1"/>
</dbReference>
<dbReference type="SMR" id="Q0BMF5"/>
<dbReference type="KEGG" id="fth:FTH_0794"/>
<dbReference type="UniPathway" id="UPA00053">
    <property type="reaction ID" value="UER00088"/>
</dbReference>
<dbReference type="GO" id="GO:0005829">
    <property type="term" value="C:cytosol"/>
    <property type="evidence" value="ECO:0007669"/>
    <property type="project" value="TreeGrafter"/>
</dbReference>
<dbReference type="GO" id="GO:0005524">
    <property type="term" value="F:ATP binding"/>
    <property type="evidence" value="ECO:0007669"/>
    <property type="project" value="UniProtKB-UniRule"/>
</dbReference>
<dbReference type="GO" id="GO:0000287">
    <property type="term" value="F:magnesium ion binding"/>
    <property type="evidence" value="ECO:0007669"/>
    <property type="project" value="UniProtKB-UniRule"/>
</dbReference>
<dbReference type="GO" id="GO:0004765">
    <property type="term" value="F:shikimate kinase activity"/>
    <property type="evidence" value="ECO:0007669"/>
    <property type="project" value="UniProtKB-UniRule"/>
</dbReference>
<dbReference type="GO" id="GO:0008652">
    <property type="term" value="P:amino acid biosynthetic process"/>
    <property type="evidence" value="ECO:0007669"/>
    <property type="project" value="UniProtKB-KW"/>
</dbReference>
<dbReference type="GO" id="GO:0009073">
    <property type="term" value="P:aromatic amino acid family biosynthetic process"/>
    <property type="evidence" value="ECO:0007669"/>
    <property type="project" value="UniProtKB-KW"/>
</dbReference>
<dbReference type="GO" id="GO:0009423">
    <property type="term" value="P:chorismate biosynthetic process"/>
    <property type="evidence" value="ECO:0007669"/>
    <property type="project" value="UniProtKB-UniRule"/>
</dbReference>
<dbReference type="CDD" id="cd00464">
    <property type="entry name" value="SK"/>
    <property type="match status" value="1"/>
</dbReference>
<dbReference type="Gene3D" id="3.40.50.300">
    <property type="entry name" value="P-loop containing nucleotide triphosphate hydrolases"/>
    <property type="match status" value="1"/>
</dbReference>
<dbReference type="HAMAP" id="MF_00109">
    <property type="entry name" value="Shikimate_kinase"/>
    <property type="match status" value="1"/>
</dbReference>
<dbReference type="InterPro" id="IPR027417">
    <property type="entry name" value="P-loop_NTPase"/>
</dbReference>
<dbReference type="InterPro" id="IPR031322">
    <property type="entry name" value="Shikimate/glucono_kinase"/>
</dbReference>
<dbReference type="InterPro" id="IPR000623">
    <property type="entry name" value="Shikimate_kinase/TSH1"/>
</dbReference>
<dbReference type="InterPro" id="IPR023000">
    <property type="entry name" value="Shikimate_kinase_CS"/>
</dbReference>
<dbReference type="NCBIfam" id="NF003456">
    <property type="entry name" value="PRK05057.1"/>
    <property type="match status" value="1"/>
</dbReference>
<dbReference type="PANTHER" id="PTHR21087">
    <property type="entry name" value="SHIKIMATE KINASE"/>
    <property type="match status" value="1"/>
</dbReference>
<dbReference type="PANTHER" id="PTHR21087:SF16">
    <property type="entry name" value="SHIKIMATE KINASE 1, CHLOROPLASTIC"/>
    <property type="match status" value="1"/>
</dbReference>
<dbReference type="Pfam" id="PF01202">
    <property type="entry name" value="SKI"/>
    <property type="match status" value="1"/>
</dbReference>
<dbReference type="PRINTS" id="PR01100">
    <property type="entry name" value="SHIKIMTKNASE"/>
</dbReference>
<dbReference type="SUPFAM" id="SSF52540">
    <property type="entry name" value="P-loop containing nucleoside triphosphate hydrolases"/>
    <property type="match status" value="1"/>
</dbReference>
<dbReference type="PROSITE" id="PS01128">
    <property type="entry name" value="SHIKIMATE_KINASE"/>
    <property type="match status" value="1"/>
</dbReference>
<reference key="1">
    <citation type="journal article" date="2006" name="J. Bacteriol.">
        <title>Chromosome rearrangement and diversification of Francisella tularensis revealed by the type B (OSU18) genome sequence.</title>
        <authorList>
            <person name="Petrosino J.F."/>
            <person name="Xiang Q."/>
            <person name="Karpathy S.E."/>
            <person name="Jiang H."/>
            <person name="Yerrapragada S."/>
            <person name="Liu Y."/>
            <person name="Gioia J."/>
            <person name="Hemphill L."/>
            <person name="Gonzalez A."/>
            <person name="Raghavan T.M."/>
            <person name="Uzman A."/>
            <person name="Fox G.E."/>
            <person name="Highlander S."/>
            <person name="Reichard M."/>
            <person name="Morton R.J."/>
            <person name="Clinkenbeard K.D."/>
            <person name="Weinstock G.M."/>
        </authorList>
    </citation>
    <scope>NUCLEOTIDE SEQUENCE [LARGE SCALE GENOMIC DNA]</scope>
    <source>
        <strain>OSU18</strain>
    </source>
</reference>
<gene>
    <name evidence="1" type="primary">aroK</name>
    <name type="ordered locus">FTH_0794</name>
</gene>
<keyword id="KW-0028">Amino-acid biosynthesis</keyword>
<keyword id="KW-0057">Aromatic amino acid biosynthesis</keyword>
<keyword id="KW-0067">ATP-binding</keyword>
<keyword id="KW-0963">Cytoplasm</keyword>
<keyword id="KW-0418">Kinase</keyword>
<keyword id="KW-0460">Magnesium</keyword>
<keyword id="KW-0479">Metal-binding</keyword>
<keyword id="KW-0547">Nucleotide-binding</keyword>
<keyword id="KW-0808">Transferase</keyword>
<protein>
    <recommendedName>
        <fullName evidence="1">Shikimate kinase</fullName>
        <shortName evidence="1">SK</shortName>
        <ecNumber evidence="1">2.7.1.71</ecNumber>
    </recommendedName>
</protein>
<comment type="function">
    <text evidence="1">Catalyzes the specific phosphorylation of the 3-hydroxyl group of shikimic acid using ATP as a cosubstrate.</text>
</comment>
<comment type="catalytic activity">
    <reaction evidence="1">
        <text>shikimate + ATP = 3-phosphoshikimate + ADP + H(+)</text>
        <dbReference type="Rhea" id="RHEA:13121"/>
        <dbReference type="ChEBI" id="CHEBI:15378"/>
        <dbReference type="ChEBI" id="CHEBI:30616"/>
        <dbReference type="ChEBI" id="CHEBI:36208"/>
        <dbReference type="ChEBI" id="CHEBI:145989"/>
        <dbReference type="ChEBI" id="CHEBI:456216"/>
        <dbReference type="EC" id="2.7.1.71"/>
    </reaction>
</comment>
<comment type="cofactor">
    <cofactor evidence="1">
        <name>Mg(2+)</name>
        <dbReference type="ChEBI" id="CHEBI:18420"/>
    </cofactor>
    <text evidence="1">Binds 1 Mg(2+) ion per subunit.</text>
</comment>
<comment type="pathway">
    <text evidence="1">Metabolic intermediate biosynthesis; chorismate biosynthesis; chorismate from D-erythrose 4-phosphate and phosphoenolpyruvate: step 5/7.</text>
</comment>
<comment type="subunit">
    <text evidence="1">Monomer.</text>
</comment>
<comment type="subcellular location">
    <subcellularLocation>
        <location evidence="1">Cytoplasm</location>
    </subcellularLocation>
</comment>
<comment type="similarity">
    <text evidence="1">Belongs to the shikimate kinase family.</text>
</comment>
<name>AROK_FRATO</name>
<proteinExistence type="inferred from homology"/>
<feature type="chain" id="PRO_1000022972" description="Shikimate kinase">
    <location>
        <begin position="1"/>
        <end position="176"/>
    </location>
</feature>
<feature type="binding site" evidence="1">
    <location>
        <begin position="14"/>
        <end position="19"/>
    </location>
    <ligand>
        <name>ATP</name>
        <dbReference type="ChEBI" id="CHEBI:30616"/>
    </ligand>
</feature>
<feature type="binding site" evidence="1">
    <location>
        <position position="18"/>
    </location>
    <ligand>
        <name>Mg(2+)</name>
        <dbReference type="ChEBI" id="CHEBI:18420"/>
    </ligand>
</feature>
<feature type="binding site" evidence="1">
    <location>
        <position position="36"/>
    </location>
    <ligand>
        <name>substrate</name>
    </ligand>
</feature>
<feature type="binding site" evidence="1">
    <location>
        <position position="60"/>
    </location>
    <ligand>
        <name>substrate</name>
    </ligand>
</feature>
<feature type="binding site" evidence="1">
    <location>
        <position position="83"/>
    </location>
    <ligand>
        <name>substrate</name>
    </ligand>
</feature>
<feature type="binding site" evidence="1">
    <location>
        <position position="121"/>
    </location>
    <ligand>
        <name>ATP</name>
        <dbReference type="ChEBI" id="CHEBI:30616"/>
    </ligand>
</feature>
<feature type="binding site" evidence="1">
    <location>
        <position position="140"/>
    </location>
    <ligand>
        <name>substrate</name>
    </ligand>
</feature>
<accession>Q0BMF5</accession>
<evidence type="ECO:0000255" key="1">
    <source>
        <dbReference type="HAMAP-Rule" id="MF_00109"/>
    </source>
</evidence>
<organism>
    <name type="scientific">Francisella tularensis subsp. holarctica (strain OSU18)</name>
    <dbReference type="NCBI Taxonomy" id="393011"/>
    <lineage>
        <taxon>Bacteria</taxon>
        <taxon>Pseudomonadati</taxon>
        <taxon>Pseudomonadota</taxon>
        <taxon>Gammaproteobacteria</taxon>
        <taxon>Thiotrichales</taxon>
        <taxon>Francisellaceae</taxon>
        <taxon>Francisella</taxon>
    </lineage>
</organism>
<sequence>MIRTKNIFLIGPVGAGKSTIGKQLAKQLKLEFIDSDDVIEKKCGVDINWIFDLEGEEGFRKREREVISEILAEKQNIVLATGGGAILDPETRSLLSSRGKVVYLEATIEQQLERTSKDTKRPLLRVDDKRPVLEQLMAEREPLYRSIADVVVETNGATVKNIVNKISTFLVEETIL</sequence>